<comment type="catalytic activity">
    <reaction evidence="1">
        <text>L-cysteine + L-glutamate + ATP = gamma-L-glutamyl-L-cysteine + ADP + phosphate + H(+)</text>
        <dbReference type="Rhea" id="RHEA:13285"/>
        <dbReference type="ChEBI" id="CHEBI:15378"/>
        <dbReference type="ChEBI" id="CHEBI:29985"/>
        <dbReference type="ChEBI" id="CHEBI:30616"/>
        <dbReference type="ChEBI" id="CHEBI:35235"/>
        <dbReference type="ChEBI" id="CHEBI:43474"/>
        <dbReference type="ChEBI" id="CHEBI:58173"/>
        <dbReference type="ChEBI" id="CHEBI:456216"/>
        <dbReference type="EC" id="6.3.2.2"/>
    </reaction>
</comment>
<comment type="pathway">
    <text evidence="1">Sulfur metabolism; glutathione biosynthesis; glutathione from L-cysteine and L-glutamate: step 1/2.</text>
</comment>
<comment type="similarity">
    <text evidence="1">Belongs to the glutamate--cysteine ligase type 1 family. Type 1 subfamily.</text>
</comment>
<dbReference type="EC" id="6.3.2.2" evidence="1"/>
<dbReference type="EMBL" id="CP000247">
    <property type="protein sequence ID" value="ABG70642.1"/>
    <property type="molecule type" value="Genomic_DNA"/>
</dbReference>
<dbReference type="RefSeq" id="WP_000611804.1">
    <property type="nucleotide sequence ID" value="NC_008253.1"/>
</dbReference>
<dbReference type="SMR" id="Q0TEI7"/>
<dbReference type="KEGG" id="ecp:ECP_2653"/>
<dbReference type="HOGENOM" id="CLU_020728_3_0_6"/>
<dbReference type="UniPathway" id="UPA00142">
    <property type="reaction ID" value="UER00209"/>
</dbReference>
<dbReference type="Proteomes" id="UP000009182">
    <property type="component" value="Chromosome"/>
</dbReference>
<dbReference type="GO" id="GO:0005829">
    <property type="term" value="C:cytosol"/>
    <property type="evidence" value="ECO:0007669"/>
    <property type="project" value="TreeGrafter"/>
</dbReference>
<dbReference type="GO" id="GO:0005524">
    <property type="term" value="F:ATP binding"/>
    <property type="evidence" value="ECO:0007669"/>
    <property type="project" value="UniProtKB-KW"/>
</dbReference>
<dbReference type="GO" id="GO:0004357">
    <property type="term" value="F:glutamate-cysteine ligase activity"/>
    <property type="evidence" value="ECO:0007669"/>
    <property type="project" value="UniProtKB-UniRule"/>
</dbReference>
<dbReference type="GO" id="GO:0046872">
    <property type="term" value="F:metal ion binding"/>
    <property type="evidence" value="ECO:0007669"/>
    <property type="project" value="TreeGrafter"/>
</dbReference>
<dbReference type="GO" id="GO:0006750">
    <property type="term" value="P:glutathione biosynthetic process"/>
    <property type="evidence" value="ECO:0007669"/>
    <property type="project" value="UniProtKB-UniRule"/>
</dbReference>
<dbReference type="FunFam" id="3.30.590.20:FF:000001">
    <property type="entry name" value="Glutamate--cysteine ligase"/>
    <property type="match status" value="1"/>
</dbReference>
<dbReference type="Gene3D" id="3.30.590.20">
    <property type="match status" value="1"/>
</dbReference>
<dbReference type="HAMAP" id="MF_00578">
    <property type="entry name" value="Glu_cys_ligase"/>
    <property type="match status" value="1"/>
</dbReference>
<dbReference type="InterPro" id="IPR014746">
    <property type="entry name" value="Gln_synth/guanido_kin_cat_dom"/>
</dbReference>
<dbReference type="InterPro" id="IPR007370">
    <property type="entry name" value="Glu_cys_ligase"/>
</dbReference>
<dbReference type="InterPro" id="IPR006334">
    <property type="entry name" value="Glut_cys_ligase"/>
</dbReference>
<dbReference type="NCBIfam" id="TIGR01434">
    <property type="entry name" value="glu_cys_ligase"/>
    <property type="match status" value="1"/>
</dbReference>
<dbReference type="PANTHER" id="PTHR38761">
    <property type="entry name" value="GLUTAMATE--CYSTEINE LIGASE"/>
    <property type="match status" value="1"/>
</dbReference>
<dbReference type="PANTHER" id="PTHR38761:SF1">
    <property type="entry name" value="GLUTAMATE--CYSTEINE LIGASE"/>
    <property type="match status" value="1"/>
</dbReference>
<dbReference type="Pfam" id="PF04262">
    <property type="entry name" value="Glu_cys_ligase"/>
    <property type="match status" value="1"/>
</dbReference>
<dbReference type="SUPFAM" id="SSF55931">
    <property type="entry name" value="Glutamine synthetase/guanido kinase"/>
    <property type="match status" value="1"/>
</dbReference>
<organism>
    <name type="scientific">Escherichia coli O6:K15:H31 (strain 536 / UPEC)</name>
    <dbReference type="NCBI Taxonomy" id="362663"/>
    <lineage>
        <taxon>Bacteria</taxon>
        <taxon>Pseudomonadati</taxon>
        <taxon>Pseudomonadota</taxon>
        <taxon>Gammaproteobacteria</taxon>
        <taxon>Enterobacterales</taxon>
        <taxon>Enterobacteriaceae</taxon>
        <taxon>Escherichia</taxon>
    </lineage>
</organism>
<protein>
    <recommendedName>
        <fullName evidence="1">Glutamate--cysteine ligase</fullName>
        <ecNumber evidence="1">6.3.2.2</ecNumber>
    </recommendedName>
    <alternativeName>
        <fullName evidence="1">Gamma-ECS</fullName>
        <shortName evidence="1">GCS</shortName>
    </alternativeName>
    <alternativeName>
        <fullName evidence="1">Gamma-glutamylcysteine synthetase</fullName>
    </alternativeName>
</protein>
<feature type="chain" id="PRO_1000025170" description="Glutamate--cysteine ligase">
    <location>
        <begin position="1"/>
        <end position="518"/>
    </location>
</feature>
<name>GSH1_ECOL5</name>
<proteinExistence type="inferred from homology"/>
<evidence type="ECO:0000255" key="1">
    <source>
        <dbReference type="HAMAP-Rule" id="MF_00578"/>
    </source>
</evidence>
<reference key="1">
    <citation type="journal article" date="2006" name="Mol. Microbiol.">
        <title>Role of pathogenicity island-associated integrases in the genome plasticity of uropathogenic Escherichia coli strain 536.</title>
        <authorList>
            <person name="Hochhut B."/>
            <person name="Wilde C."/>
            <person name="Balling G."/>
            <person name="Middendorf B."/>
            <person name="Dobrindt U."/>
            <person name="Brzuszkiewicz E."/>
            <person name="Gottschalk G."/>
            <person name="Carniel E."/>
            <person name="Hacker J."/>
        </authorList>
    </citation>
    <scope>NUCLEOTIDE SEQUENCE [LARGE SCALE GENOMIC DNA]</scope>
    <source>
        <strain>536 / UPEC</strain>
    </source>
</reference>
<accession>Q0TEI7</accession>
<sequence>MIPDVSQALAWLEKHPQALKGIQRGLERETLRVNADGTLATTGHPEALGSALTHKWITTDFAEALLEFITPVDGDIEHMLTFMRDLHRYTARNMGDERMWPLSMPCYIAEGQDIELAQYGTSNTGRFKTLYREGLKNRYGALMQTISGVHYNFSLPMAFWQAKCGDISGADAKEKISAGYFRVIRNYYRFGWVIPYLFGASPAICSSFLQGKPTSLPFEKTECGMYYLPYATSLRLSDLGYTNKSQSNLGITFNDLYEYVAGLKQAIKTPSEEYAKIGIEKDGKRLQINSNVLQIENELYAPIRPKRVTRSGESPSDALLRGGIEYIEVRSLDINPFSPIGVDEQQVRFLDLFMVWCALADAPEMSSSELACTRVNWNRVILEGRKPGLTLGIGCETAQFPLPQVGKDLFRDLKRVAQTLDSINGGEAYQKVCDELVACFDNPDLTFSARILRSMIDTGIGGTGKAFAEAYRNLLREEPLEILREEDFVAEREASERRQQEMEAADTEPFAVWLEKHA</sequence>
<gene>
    <name evidence="1" type="primary">gshA</name>
    <name type="ordered locus">ECP_2653</name>
</gene>
<keyword id="KW-0067">ATP-binding</keyword>
<keyword id="KW-0317">Glutathione biosynthesis</keyword>
<keyword id="KW-0436">Ligase</keyword>
<keyword id="KW-0547">Nucleotide-binding</keyword>